<protein>
    <recommendedName>
        <fullName evidence="1">Ribose-5-phosphate isomerase A</fullName>
        <ecNumber evidence="1">5.3.1.6</ecNumber>
    </recommendedName>
    <alternativeName>
        <fullName evidence="1">Phosphoriboisomerase A</fullName>
        <shortName evidence="1">PRI</shortName>
    </alternativeName>
</protein>
<evidence type="ECO:0000255" key="1">
    <source>
        <dbReference type="HAMAP-Rule" id="MF_00170"/>
    </source>
</evidence>
<comment type="function">
    <text evidence="1">Catalyzes the reversible conversion of ribose-5-phosphate to ribulose 5-phosphate.</text>
</comment>
<comment type="catalytic activity">
    <reaction evidence="1">
        <text>aldehydo-D-ribose 5-phosphate = D-ribulose 5-phosphate</text>
        <dbReference type="Rhea" id="RHEA:14657"/>
        <dbReference type="ChEBI" id="CHEBI:58121"/>
        <dbReference type="ChEBI" id="CHEBI:58273"/>
        <dbReference type="EC" id="5.3.1.6"/>
    </reaction>
</comment>
<comment type="pathway">
    <text evidence="1">Carbohydrate degradation; pentose phosphate pathway; D-ribose 5-phosphate from D-ribulose 5-phosphate (non-oxidative stage): step 1/1.</text>
</comment>
<comment type="subunit">
    <text evidence="1">Homodimer.</text>
</comment>
<comment type="similarity">
    <text evidence="1">Belongs to the ribose 5-phosphate isomerase family.</text>
</comment>
<name>RPIA_STRS7</name>
<accession>C0ME44</accession>
<keyword id="KW-0413">Isomerase</keyword>
<gene>
    <name evidence="1" type="primary">rpiA</name>
    <name type="ordered locus">SZO_08070</name>
</gene>
<reference key="1">
    <citation type="journal article" date="2009" name="PLoS Pathog.">
        <title>Genomic evidence for the evolution of Streptococcus equi: host restriction, increased virulence, and genetic exchange with human pathogens.</title>
        <authorList>
            <person name="Holden M.T.G."/>
            <person name="Heather Z."/>
            <person name="Paillot R."/>
            <person name="Steward K.F."/>
            <person name="Webb K."/>
            <person name="Ainslie F."/>
            <person name="Jourdan T."/>
            <person name="Bason N.C."/>
            <person name="Holroyd N.E."/>
            <person name="Mungall K."/>
            <person name="Quail M.A."/>
            <person name="Sanders M."/>
            <person name="Simmonds M."/>
            <person name="Willey D."/>
            <person name="Brooks K."/>
            <person name="Aanensen D.M."/>
            <person name="Spratt B.G."/>
            <person name="Jolley K.A."/>
            <person name="Maiden M.C.J."/>
            <person name="Kehoe M."/>
            <person name="Chanter N."/>
            <person name="Bentley S.D."/>
            <person name="Robinson C."/>
            <person name="Maskell D.J."/>
            <person name="Parkhill J."/>
            <person name="Waller A.S."/>
        </authorList>
    </citation>
    <scope>NUCLEOTIDE SEQUENCE [LARGE SCALE GENOMIC DNA]</scope>
    <source>
        <strain>H70</strain>
    </source>
</reference>
<dbReference type="EC" id="5.3.1.6" evidence="1"/>
<dbReference type="EMBL" id="FM204884">
    <property type="protein sequence ID" value="CAW98973.1"/>
    <property type="molecule type" value="Genomic_DNA"/>
</dbReference>
<dbReference type="SMR" id="C0ME44"/>
<dbReference type="KEGG" id="seq:SZO_08070"/>
<dbReference type="PATRIC" id="fig|40041.11.peg.859"/>
<dbReference type="eggNOG" id="COG0120">
    <property type="taxonomic scope" value="Bacteria"/>
</dbReference>
<dbReference type="HOGENOM" id="CLU_056590_1_0_9"/>
<dbReference type="UniPathway" id="UPA00115">
    <property type="reaction ID" value="UER00412"/>
</dbReference>
<dbReference type="Proteomes" id="UP000001368">
    <property type="component" value="Chromosome"/>
</dbReference>
<dbReference type="GO" id="GO:0004751">
    <property type="term" value="F:ribose-5-phosphate isomerase activity"/>
    <property type="evidence" value="ECO:0007669"/>
    <property type="project" value="UniProtKB-UniRule"/>
</dbReference>
<dbReference type="GO" id="GO:0009052">
    <property type="term" value="P:pentose-phosphate shunt, non-oxidative branch"/>
    <property type="evidence" value="ECO:0007669"/>
    <property type="project" value="UniProtKB-UniRule"/>
</dbReference>
<dbReference type="CDD" id="cd01398">
    <property type="entry name" value="RPI_A"/>
    <property type="match status" value="1"/>
</dbReference>
<dbReference type="FunFam" id="3.40.50.1360:FF:000001">
    <property type="entry name" value="Ribose-5-phosphate isomerase A"/>
    <property type="match status" value="1"/>
</dbReference>
<dbReference type="Gene3D" id="3.30.70.260">
    <property type="match status" value="1"/>
</dbReference>
<dbReference type="Gene3D" id="3.40.50.1360">
    <property type="match status" value="1"/>
</dbReference>
<dbReference type="HAMAP" id="MF_00170">
    <property type="entry name" value="Rib_5P_isom_A"/>
    <property type="match status" value="1"/>
</dbReference>
<dbReference type="InterPro" id="IPR037171">
    <property type="entry name" value="NagB/RpiA_transferase-like"/>
</dbReference>
<dbReference type="InterPro" id="IPR050262">
    <property type="entry name" value="Ribose-5P_isomerase"/>
</dbReference>
<dbReference type="InterPro" id="IPR020672">
    <property type="entry name" value="Ribose5P_isomerase_typA_subgr"/>
</dbReference>
<dbReference type="InterPro" id="IPR004788">
    <property type="entry name" value="Ribose5P_isomerase_type_A"/>
</dbReference>
<dbReference type="NCBIfam" id="NF001924">
    <property type="entry name" value="PRK00702.1"/>
    <property type="match status" value="1"/>
</dbReference>
<dbReference type="NCBIfam" id="TIGR00021">
    <property type="entry name" value="rpiA"/>
    <property type="match status" value="1"/>
</dbReference>
<dbReference type="PANTHER" id="PTHR43748">
    <property type="entry name" value="RIBOSE-5-PHOSPHATE ISOMERASE 3, CHLOROPLASTIC-RELATED"/>
    <property type="match status" value="1"/>
</dbReference>
<dbReference type="PANTHER" id="PTHR43748:SF3">
    <property type="entry name" value="RIBOSE-5-PHOSPHATE ISOMERASE 3, CHLOROPLASTIC-RELATED"/>
    <property type="match status" value="1"/>
</dbReference>
<dbReference type="Pfam" id="PF06026">
    <property type="entry name" value="Rib_5-P_isom_A"/>
    <property type="match status" value="1"/>
</dbReference>
<dbReference type="SUPFAM" id="SSF75445">
    <property type="entry name" value="D-ribose-5-phosphate isomerase (RpiA), lid domain"/>
    <property type="match status" value="1"/>
</dbReference>
<dbReference type="SUPFAM" id="SSF100950">
    <property type="entry name" value="NagB/RpiA/CoA transferase-like"/>
    <property type="match status" value="1"/>
</dbReference>
<feature type="chain" id="PRO_1000203685" description="Ribose-5-phosphate isomerase A">
    <location>
        <begin position="1"/>
        <end position="227"/>
    </location>
</feature>
<feature type="active site" description="Proton acceptor" evidence="1">
    <location>
        <position position="104"/>
    </location>
</feature>
<feature type="binding site" evidence="1">
    <location>
        <begin position="26"/>
        <end position="29"/>
    </location>
    <ligand>
        <name>substrate</name>
    </ligand>
</feature>
<feature type="binding site" evidence="1">
    <location>
        <begin position="82"/>
        <end position="85"/>
    </location>
    <ligand>
        <name>substrate</name>
    </ligand>
</feature>
<feature type="binding site" evidence="1">
    <location>
        <begin position="95"/>
        <end position="98"/>
    </location>
    <ligand>
        <name>substrate</name>
    </ligand>
</feature>
<feature type="binding site" evidence="1">
    <location>
        <position position="122"/>
    </location>
    <ligand>
        <name>substrate</name>
    </ligand>
</feature>
<proteinExistence type="inferred from homology"/>
<organism>
    <name type="scientific">Streptococcus equi subsp. zooepidemicus (strain H70)</name>
    <dbReference type="NCBI Taxonomy" id="553483"/>
    <lineage>
        <taxon>Bacteria</taxon>
        <taxon>Bacillati</taxon>
        <taxon>Bacillota</taxon>
        <taxon>Bacilli</taxon>
        <taxon>Lactobacillales</taxon>
        <taxon>Streptococcaceae</taxon>
        <taxon>Streptococcus</taxon>
    </lineage>
</organism>
<sequence length="227" mass="24515">MEALKKLAGVTAAQYVTDGMTIGLGTGSTAYYFVEEIGRRIKEEGLQVVGVTTSSVTTKQAEGLGIPLTSIDDIDCIDLTVDGADEVDKAFNGIKGGGAALLMEKIVATPTKEYIWVVDESKLVDHLGAFKLPVEVVQYGADRLFRVFERAGYKPSFRMKGDKRLITDMQNFIIDLDLGCIENPFDFGRLLDQTVGVVEHGLFNGMVDKVIVAGQAGVTVLEANQST</sequence>